<sequence>MAKDIRVLLYYLYTPIENAEQFAADHLAFCKSIGLKGRILVADEGINGTVSGDYETTQKYMDYVHSLPGMEELWFKIDEENEQAFKKMFVRYKKEIVHLGLEDNDFDNDINPLETTGAYLSPKEFKEALLDKDTVVLDTRNDYEYDLGHFRGAIRPDIRNFRELPQWVRDNKEKFMDKRVVVYCTGGVRCEKFSGWMVREGYKDVGQLHGGIATYGKDPEVQGELWDGKMYVFDERIAVDVNHVNPTIVGKDWFDGTPCERYVNCGNPFCNRRILTSEENEDKYLRGCSHECRVHPRNRYVSKNELTQAEVIERLAAIGESLDQAATV</sequence>
<gene>
    <name evidence="1" type="primary">trhO</name>
    <name type="ordered locus">spr0084</name>
</gene>
<organism>
    <name type="scientific">Streptococcus pneumoniae (strain ATCC BAA-255 / R6)</name>
    <dbReference type="NCBI Taxonomy" id="171101"/>
    <lineage>
        <taxon>Bacteria</taxon>
        <taxon>Bacillati</taxon>
        <taxon>Bacillota</taxon>
        <taxon>Bacilli</taxon>
        <taxon>Lactobacillales</taxon>
        <taxon>Streptococcaceae</taxon>
        <taxon>Streptococcus</taxon>
    </lineage>
</organism>
<keyword id="KW-0560">Oxidoreductase</keyword>
<keyword id="KW-1185">Reference proteome</keyword>
<keyword id="KW-0819">tRNA processing</keyword>
<reference key="1">
    <citation type="journal article" date="2001" name="J. Bacteriol.">
        <title>Genome of the bacterium Streptococcus pneumoniae strain R6.</title>
        <authorList>
            <person name="Hoskins J."/>
            <person name="Alborn W.E. Jr."/>
            <person name="Arnold J."/>
            <person name="Blaszczak L.C."/>
            <person name="Burgett S."/>
            <person name="DeHoff B.S."/>
            <person name="Estrem S.T."/>
            <person name="Fritz L."/>
            <person name="Fu D.-J."/>
            <person name="Fuller W."/>
            <person name="Geringer C."/>
            <person name="Gilmour R."/>
            <person name="Glass J.S."/>
            <person name="Khoja H."/>
            <person name="Kraft A.R."/>
            <person name="Lagace R.E."/>
            <person name="LeBlanc D.J."/>
            <person name="Lee L.N."/>
            <person name="Lefkowitz E.J."/>
            <person name="Lu J."/>
            <person name="Matsushima P."/>
            <person name="McAhren S.M."/>
            <person name="McHenney M."/>
            <person name="McLeaster K."/>
            <person name="Mundy C.W."/>
            <person name="Nicas T.I."/>
            <person name="Norris F.H."/>
            <person name="O'Gara M."/>
            <person name="Peery R.B."/>
            <person name="Robertson G.T."/>
            <person name="Rockey P."/>
            <person name="Sun P.-M."/>
            <person name="Winkler M.E."/>
            <person name="Yang Y."/>
            <person name="Young-Bellido M."/>
            <person name="Zhao G."/>
            <person name="Zook C.A."/>
            <person name="Baltz R.H."/>
            <person name="Jaskunas S.R."/>
            <person name="Rosteck P.R. Jr."/>
            <person name="Skatrud P.L."/>
            <person name="Glass J.I."/>
        </authorList>
    </citation>
    <scope>NUCLEOTIDE SEQUENCE [LARGE SCALE GENOMIC DNA]</scope>
    <source>
        <strain>ATCC BAA-255 / R6</strain>
    </source>
</reference>
<evidence type="ECO:0000255" key="1">
    <source>
        <dbReference type="HAMAP-Rule" id="MF_00469"/>
    </source>
</evidence>
<name>TRHO_STRR6</name>
<accession>P67331</accession>
<accession>Q97T60</accession>
<proteinExistence type="inferred from homology"/>
<protein>
    <recommendedName>
        <fullName evidence="1">tRNA uridine(34) hydroxylase</fullName>
        <ecNumber evidence="1">1.14.-.-</ecNumber>
    </recommendedName>
    <alternativeName>
        <fullName evidence="1">tRNA hydroxylation protein O</fullName>
    </alternativeName>
</protein>
<dbReference type="EC" id="1.14.-.-" evidence="1"/>
<dbReference type="EMBL" id="AE007317">
    <property type="protein sequence ID" value="AAK98888.1"/>
    <property type="molecule type" value="Genomic_DNA"/>
</dbReference>
<dbReference type="PIR" id="D97882">
    <property type="entry name" value="D97882"/>
</dbReference>
<dbReference type="RefSeq" id="NP_357678.1">
    <property type="nucleotide sequence ID" value="NC_003098.1"/>
</dbReference>
<dbReference type="RefSeq" id="WP_001030031.1">
    <property type="nucleotide sequence ID" value="NC_003098.1"/>
</dbReference>
<dbReference type="SMR" id="P67331"/>
<dbReference type="STRING" id="171101.spr0084"/>
<dbReference type="KEGG" id="spr:spr0084"/>
<dbReference type="PATRIC" id="fig|171101.6.peg.101"/>
<dbReference type="eggNOG" id="COG1054">
    <property type="taxonomic scope" value="Bacteria"/>
</dbReference>
<dbReference type="HOGENOM" id="CLU_038878_1_0_9"/>
<dbReference type="PHI-base" id="PHI:3154"/>
<dbReference type="Proteomes" id="UP000000586">
    <property type="component" value="Chromosome"/>
</dbReference>
<dbReference type="GO" id="GO:0016705">
    <property type="term" value="F:oxidoreductase activity, acting on paired donors, with incorporation or reduction of molecular oxygen"/>
    <property type="evidence" value="ECO:0007669"/>
    <property type="project" value="UniProtKB-UniRule"/>
</dbReference>
<dbReference type="GO" id="GO:0006400">
    <property type="term" value="P:tRNA modification"/>
    <property type="evidence" value="ECO:0007669"/>
    <property type="project" value="UniProtKB-UniRule"/>
</dbReference>
<dbReference type="CDD" id="cd01518">
    <property type="entry name" value="RHOD_YceA"/>
    <property type="match status" value="1"/>
</dbReference>
<dbReference type="Gene3D" id="3.30.70.100">
    <property type="match status" value="1"/>
</dbReference>
<dbReference type="Gene3D" id="3.40.250.10">
    <property type="entry name" value="Rhodanese-like domain"/>
    <property type="match status" value="1"/>
</dbReference>
<dbReference type="HAMAP" id="MF_00469">
    <property type="entry name" value="TrhO"/>
    <property type="match status" value="1"/>
</dbReference>
<dbReference type="InterPro" id="IPR001763">
    <property type="entry name" value="Rhodanese-like_dom"/>
</dbReference>
<dbReference type="InterPro" id="IPR036873">
    <property type="entry name" value="Rhodanese-like_dom_sf"/>
</dbReference>
<dbReference type="InterPro" id="IPR022111">
    <property type="entry name" value="Rhodanese_C"/>
</dbReference>
<dbReference type="InterPro" id="IPR020936">
    <property type="entry name" value="TrhO"/>
</dbReference>
<dbReference type="InterPro" id="IPR040503">
    <property type="entry name" value="TRHO_N"/>
</dbReference>
<dbReference type="NCBIfam" id="NF001135">
    <property type="entry name" value="PRK00142.1-3"/>
    <property type="match status" value="1"/>
</dbReference>
<dbReference type="NCBIfam" id="NF001137">
    <property type="entry name" value="PRK00142.1-5"/>
    <property type="match status" value="1"/>
</dbReference>
<dbReference type="PANTHER" id="PTHR43268:SF3">
    <property type="entry name" value="RHODANESE-LIKE DOMAIN-CONTAINING PROTEIN 7-RELATED"/>
    <property type="match status" value="1"/>
</dbReference>
<dbReference type="PANTHER" id="PTHR43268">
    <property type="entry name" value="THIOSULFATE SULFURTRANSFERASE/RHODANESE-LIKE DOMAIN-CONTAINING PROTEIN 2"/>
    <property type="match status" value="1"/>
</dbReference>
<dbReference type="Pfam" id="PF00581">
    <property type="entry name" value="Rhodanese"/>
    <property type="match status" value="1"/>
</dbReference>
<dbReference type="Pfam" id="PF12368">
    <property type="entry name" value="Rhodanese_C"/>
    <property type="match status" value="1"/>
</dbReference>
<dbReference type="Pfam" id="PF17773">
    <property type="entry name" value="UPF0176_N"/>
    <property type="match status" value="1"/>
</dbReference>
<dbReference type="SMART" id="SM00450">
    <property type="entry name" value="RHOD"/>
    <property type="match status" value="1"/>
</dbReference>
<dbReference type="SUPFAM" id="SSF52821">
    <property type="entry name" value="Rhodanese/Cell cycle control phosphatase"/>
    <property type="match status" value="1"/>
</dbReference>
<dbReference type="PROSITE" id="PS50206">
    <property type="entry name" value="RHODANESE_3"/>
    <property type="match status" value="1"/>
</dbReference>
<feature type="chain" id="PRO_0000161524" description="tRNA uridine(34) hydroxylase">
    <location>
        <begin position="1"/>
        <end position="328"/>
    </location>
</feature>
<feature type="domain" description="Rhodanese" evidence="1">
    <location>
        <begin position="130"/>
        <end position="224"/>
    </location>
</feature>
<feature type="active site" description="Cysteine persulfide intermediate" evidence="1">
    <location>
        <position position="184"/>
    </location>
</feature>
<comment type="function">
    <text evidence="1">Catalyzes oxygen-dependent 5-hydroxyuridine (ho5U) modification at position 34 in tRNAs.</text>
</comment>
<comment type="catalytic activity">
    <reaction evidence="1">
        <text>uridine(34) in tRNA + AH2 + O2 = 5-hydroxyuridine(34) in tRNA + A + H2O</text>
        <dbReference type="Rhea" id="RHEA:64224"/>
        <dbReference type="Rhea" id="RHEA-COMP:11727"/>
        <dbReference type="Rhea" id="RHEA-COMP:13381"/>
        <dbReference type="ChEBI" id="CHEBI:13193"/>
        <dbReference type="ChEBI" id="CHEBI:15377"/>
        <dbReference type="ChEBI" id="CHEBI:15379"/>
        <dbReference type="ChEBI" id="CHEBI:17499"/>
        <dbReference type="ChEBI" id="CHEBI:65315"/>
        <dbReference type="ChEBI" id="CHEBI:136877"/>
    </reaction>
</comment>
<comment type="similarity">
    <text evidence="1">Belongs to the TrhO family.</text>
</comment>